<organism>
    <name type="scientific">Brucella abortus biovar 1 (strain 9-941)</name>
    <dbReference type="NCBI Taxonomy" id="262698"/>
    <lineage>
        <taxon>Bacteria</taxon>
        <taxon>Pseudomonadati</taxon>
        <taxon>Pseudomonadota</taxon>
        <taxon>Alphaproteobacteria</taxon>
        <taxon>Hyphomicrobiales</taxon>
        <taxon>Brucellaceae</taxon>
        <taxon>Brucella/Ochrobactrum group</taxon>
        <taxon>Brucella</taxon>
    </lineage>
</organism>
<sequence>MFTRLITTSVLTGAIALTIGSQAFAQTELAWWHGMTGANNEMVNELSKEFNESQSEYKIVPVYKGNYPETLNAGIAAFRSKQPPAILQVFDAGSGVMMAAEGAIVPAAEVLEKGGYKFDKSQYLPGIVAYYSKPDGTMLSFPYNSSSPILYYNKDAFKKAGLDENKPPKTWPEVFEAAKKIKASGASPCGFTSTWLTWIQTENFAAWNNVPYGTNENGLAGTDVKLEINSPLYVEHFQAIADLAKDGTFRYGGRTSEAKQLFTSGECAMLTESSGGLGDVVKSGINYGIGQLPYYEGHGPQNTIPGGASLWVFAGLSDDQYKGIAEFFNFLSQTKIQVKLHEKSGYLPVTLAAYEETKKSDFYEKNPGRETPILQMMGKEPTENSKGVRLVNLPQVRDILNEEFEAMLGGKQDAKTALDNAVKRGNAAIAAAQ</sequence>
<reference key="1">
    <citation type="journal article" date="2005" name="J. Bacteriol.">
        <title>Completion of the genome sequence of Brucella abortus and comparison to the highly similar genomes of Brucella melitensis and Brucella suis.</title>
        <authorList>
            <person name="Halling S.M."/>
            <person name="Peterson-Burch B.D."/>
            <person name="Bricker B.J."/>
            <person name="Zuerner R.L."/>
            <person name="Qing Z."/>
            <person name="Li L.-L."/>
            <person name="Kapur V."/>
            <person name="Alt D.P."/>
            <person name="Olsen S.C."/>
        </authorList>
    </citation>
    <scope>NUCLEOTIDE SEQUENCE [LARGE SCALE GENOMIC DNA]</scope>
    <source>
        <strain>9-941</strain>
    </source>
</reference>
<protein>
    <recommendedName>
        <fullName evidence="1">sn-glycerol-3-phosphate-binding periplasmic protein UgpB</fullName>
    </recommendedName>
</protein>
<accession>Q578E6</accession>
<gene>
    <name type="primary">ugpB</name>
    <name type="ordered locus">BruAb2_0571</name>
</gene>
<keyword id="KW-0574">Periplasm</keyword>
<keyword id="KW-0732">Signal</keyword>
<keyword id="KW-0813">Transport</keyword>
<proteinExistence type="inferred from homology"/>
<dbReference type="EMBL" id="AE017224">
    <property type="protein sequence ID" value="AAX75988.1"/>
    <property type="molecule type" value="Genomic_DNA"/>
</dbReference>
<dbReference type="RefSeq" id="WP_002965982.1">
    <property type="nucleotide sequence ID" value="NC_006933.1"/>
</dbReference>
<dbReference type="SMR" id="Q578E6"/>
<dbReference type="EnsemblBacteria" id="AAX75988">
    <property type="protein sequence ID" value="AAX75988"/>
    <property type="gene ID" value="BruAb2_0571"/>
</dbReference>
<dbReference type="GeneID" id="93015520"/>
<dbReference type="KEGG" id="bmb:BruAb2_0571"/>
<dbReference type="HOGENOM" id="CLU_031285_3_0_5"/>
<dbReference type="PRO" id="PR:Q578E6"/>
<dbReference type="Proteomes" id="UP000000540">
    <property type="component" value="Chromosome II"/>
</dbReference>
<dbReference type="GO" id="GO:0042597">
    <property type="term" value="C:periplasmic space"/>
    <property type="evidence" value="ECO:0007669"/>
    <property type="project" value="UniProtKB-SubCell"/>
</dbReference>
<dbReference type="CDD" id="cd14748">
    <property type="entry name" value="PBP2_UgpB"/>
    <property type="match status" value="1"/>
</dbReference>
<dbReference type="Gene3D" id="3.40.190.10">
    <property type="entry name" value="Periplasmic binding protein-like II"/>
    <property type="match status" value="2"/>
</dbReference>
<dbReference type="InterPro" id="IPR050490">
    <property type="entry name" value="Bact_solute-bd_prot1"/>
</dbReference>
<dbReference type="InterPro" id="IPR006059">
    <property type="entry name" value="SBP"/>
</dbReference>
<dbReference type="NCBIfam" id="NF008211">
    <property type="entry name" value="PRK10974.1"/>
    <property type="match status" value="1"/>
</dbReference>
<dbReference type="PANTHER" id="PTHR43649">
    <property type="entry name" value="ARABINOSE-BINDING PROTEIN-RELATED"/>
    <property type="match status" value="1"/>
</dbReference>
<dbReference type="PANTHER" id="PTHR43649:SF31">
    <property type="entry name" value="SN-GLYCEROL-3-PHOSPHATE-BINDING PERIPLASMIC PROTEIN UGPB"/>
    <property type="match status" value="1"/>
</dbReference>
<dbReference type="Pfam" id="PF13416">
    <property type="entry name" value="SBP_bac_8"/>
    <property type="match status" value="1"/>
</dbReference>
<dbReference type="SUPFAM" id="SSF53850">
    <property type="entry name" value="Periplasmic binding protein-like II"/>
    <property type="match status" value="1"/>
</dbReference>
<name>UGPB_BRUAB</name>
<evidence type="ECO:0000250" key="1">
    <source>
        <dbReference type="UniProtKB" id="P0AG80"/>
    </source>
</evidence>
<evidence type="ECO:0000255" key="2"/>
<evidence type="ECO:0000305" key="3"/>
<comment type="function">
    <text evidence="1">Part of the ABC transporter complex UgpBAEC involved in sn-glycerol-3-phosphate (G3P) import. Binds G3P.</text>
</comment>
<comment type="subunit">
    <text evidence="1">The complex is composed of two ATP-binding proteins (UgpC), two transmembrane proteins (UgpA and UgpE) and a solute-binding protein (UgpB).</text>
</comment>
<comment type="subcellular location">
    <subcellularLocation>
        <location evidence="1">Periplasm</location>
    </subcellularLocation>
</comment>
<comment type="similarity">
    <text evidence="3">Belongs to the bacterial solute-binding protein 1 family.</text>
</comment>
<feature type="signal peptide" evidence="2">
    <location>
        <begin position="1"/>
        <end position="25"/>
    </location>
</feature>
<feature type="chain" id="PRO_0000290125" description="sn-glycerol-3-phosphate-binding periplasmic protein UgpB">
    <location>
        <begin position="26"/>
        <end position="433"/>
    </location>
</feature>
<feature type="binding site" evidence="1">
    <location>
        <position position="67"/>
    </location>
    <ligand>
        <name>sn-glycerol 3-phosphate</name>
        <dbReference type="ChEBI" id="CHEBI:57597"/>
    </ligand>
</feature>
<feature type="binding site" evidence="1">
    <location>
        <position position="91"/>
    </location>
    <ligand>
        <name>sn-glycerol 3-phosphate</name>
        <dbReference type="ChEBI" id="CHEBI:57597"/>
    </ligand>
</feature>
<feature type="binding site" evidence="1">
    <location>
        <position position="146"/>
    </location>
    <ligand>
        <name>sn-glycerol 3-phosphate</name>
        <dbReference type="ChEBI" id="CHEBI:57597"/>
    </ligand>
</feature>
<feature type="binding site" evidence="1">
    <location>
        <position position="273"/>
    </location>
    <ligand>
        <name>sn-glycerol 3-phosphate</name>
        <dbReference type="ChEBI" id="CHEBI:57597"/>
    </ligand>
</feature>
<feature type="binding site" evidence="1">
    <location>
        <position position="307"/>
    </location>
    <ligand>
        <name>sn-glycerol 3-phosphate</name>
        <dbReference type="ChEBI" id="CHEBI:57597"/>
    </ligand>
</feature>
<feature type="binding site" evidence="1">
    <location>
        <position position="346"/>
    </location>
    <ligand>
        <name>sn-glycerol 3-phosphate</name>
        <dbReference type="ChEBI" id="CHEBI:57597"/>
    </ligand>
</feature>
<feature type="binding site" evidence="1">
    <location>
        <position position="397"/>
    </location>
    <ligand>
        <name>sn-glycerol 3-phosphate</name>
        <dbReference type="ChEBI" id="CHEBI:57597"/>
    </ligand>
</feature>